<organism>
    <name type="scientific">Oryza sativa subsp. japonica</name>
    <name type="common">Rice</name>
    <dbReference type="NCBI Taxonomy" id="39947"/>
    <lineage>
        <taxon>Eukaryota</taxon>
        <taxon>Viridiplantae</taxon>
        <taxon>Streptophyta</taxon>
        <taxon>Embryophyta</taxon>
        <taxon>Tracheophyta</taxon>
        <taxon>Spermatophyta</taxon>
        <taxon>Magnoliopsida</taxon>
        <taxon>Liliopsida</taxon>
        <taxon>Poales</taxon>
        <taxon>Poaceae</taxon>
        <taxon>BOP clade</taxon>
        <taxon>Oryzoideae</taxon>
        <taxon>Oryzeae</taxon>
        <taxon>Oryzinae</taxon>
        <taxon>Oryza</taxon>
        <taxon>Oryza sativa</taxon>
    </lineage>
</organism>
<evidence type="ECO:0000255" key="1"/>
<evidence type="ECO:0000255" key="2">
    <source>
        <dbReference type="PROSITE-ProRule" id="PRU00049"/>
    </source>
</evidence>
<evidence type="ECO:0000255" key="3">
    <source>
        <dbReference type="PROSITE-ProRule" id="PRU00107"/>
    </source>
</evidence>
<evidence type="ECO:0000255" key="4">
    <source>
        <dbReference type="PROSITE-ProRule" id="PRU00169"/>
    </source>
</evidence>
<evidence type="ECO:0000269" key="5">
    <source>
    </source>
</evidence>
<evidence type="ECO:0000269" key="6">
    <source>
    </source>
</evidence>
<evidence type="ECO:0000303" key="7">
    <source>
    </source>
</evidence>
<evidence type="ECO:0000303" key="8">
    <source>
    </source>
</evidence>
<evidence type="ECO:0000303" key="9">
    <source>
    </source>
</evidence>
<evidence type="ECO:0000305" key="10"/>
<evidence type="ECO:0000312" key="11">
    <source>
        <dbReference type="EMBL" id="AP008208"/>
    </source>
</evidence>
<evidence type="ECO:0000312" key="12">
    <source>
        <dbReference type="EMBL" id="BAD16039.1"/>
    </source>
</evidence>
<feature type="chain" id="PRO_0000433811" description="Probable histidine kinase 6">
    <location>
        <begin position="1"/>
        <end position="970"/>
    </location>
</feature>
<feature type="topological domain" description="Cytoplasmic" evidence="10">
    <location>
        <begin position="1"/>
        <end position="12"/>
    </location>
</feature>
<feature type="transmembrane region" description="Helical" evidence="1">
    <location>
        <begin position="13"/>
        <end position="33"/>
    </location>
</feature>
<feature type="topological domain" description="Extracellular" evidence="10">
    <location>
        <begin position="34"/>
        <end position="306"/>
    </location>
</feature>
<feature type="transmembrane region" description="Helical" evidence="1">
    <location>
        <begin position="307"/>
        <end position="327"/>
    </location>
</feature>
<feature type="topological domain" description="Cytoplasmic" evidence="10">
    <location>
        <begin position="328"/>
        <end position="970"/>
    </location>
</feature>
<feature type="domain" description="CHASE" evidence="2">
    <location>
        <begin position="82"/>
        <end position="294"/>
    </location>
</feature>
<feature type="domain" description="Histidine kinase" evidence="3">
    <location>
        <begin position="362"/>
        <end position="651"/>
    </location>
</feature>
<feature type="domain" description="Response regulatory 1" evidence="4">
    <location>
        <begin position="676"/>
        <end position="802"/>
    </location>
</feature>
<feature type="domain" description="Response regulatory 2" evidence="4">
    <location>
        <begin position="827"/>
        <end position="962"/>
    </location>
</feature>
<feature type="modified residue" description="Phosphohistidine; by autocatalysis" evidence="3">
    <location>
        <position position="365"/>
    </location>
</feature>
<feature type="modified residue" description="4-aspartylphosphate" evidence="4">
    <location>
        <position position="877"/>
    </location>
</feature>
<feature type="mutagenesis site" description="Loss of function; when associated with A-614 and N-877." evidence="6">
    <original>H</original>
    <variation>Q</variation>
    <location>
        <position position="365"/>
    </location>
</feature>
<feature type="mutagenesis site" description="Loss of function; when associated with Q-365 and N-877." evidence="6">
    <original>G</original>
    <variation>A</variation>
    <location>
        <position position="614"/>
    </location>
</feature>
<feature type="mutagenesis site" description="Loss of function; when associated with Q-365 and A-614." evidence="6">
    <original>D</original>
    <variation>N</variation>
    <location>
        <position position="877"/>
    </location>
</feature>
<comment type="function">
    <text evidence="6">Cytokinin receptor related to bacterial two-component regulators. Functions as a histidine kinase and transmits the stress signal to a downstream MAPK cascade.</text>
</comment>
<comment type="catalytic activity">
    <reaction evidence="10">
        <text>ATP + protein L-histidine = ADP + protein N-phospho-L-histidine.</text>
        <dbReference type="EC" id="2.7.13.3"/>
    </reaction>
</comment>
<comment type="subcellular location">
    <subcellularLocation>
        <location evidence="10">Cell membrane</location>
        <topology evidence="1">Multi-pass membrane protein</topology>
    </subcellularLocation>
</comment>
<comment type="tissue specificity">
    <text evidence="6">Highly expressed in spikelets and at lower levels in roots, young leaves, mature leaves and stems.</text>
</comment>
<comment type="induction">
    <text evidence="5 6">Highly induced by isopentenyladenine (iP). Induced by cis-zeatin (cZ) and dihydrozeatin (DHZ) (PubMed:22642989). Induced by cytokinin in roots (PubMed:17408920).</text>
</comment>
<comment type="domain">
    <text evidence="10">Histidine-containing phosphotransfer domain (HPt) contains an active histidine that mediates the phosphotransfer.</text>
</comment>
<comment type="PTM">
    <text evidence="10">Activation probably requires a transfer of a phosphate group between a His in the transmitter domain and an Asp of the receiver domain.</text>
</comment>
<comment type="sequence caution" evidence="10">
    <conflict type="erroneous gene model prediction">
        <sequence resource="EMBL-CDS" id="BAD16039"/>
    </conflict>
</comment>
<reference key="1">
    <citation type="journal article" date="2006" name="Gene">
        <title>Identification and characterization of cytokinin-signalling gene families in rice.</title>
        <authorList>
            <person name="Ito Y."/>
            <person name="Kurata N."/>
        </authorList>
    </citation>
    <scope>NUCLEOTIDE SEQUENCE [GENOMIC DNA]</scope>
    <source>
        <strain>cv. Nipponbare</strain>
    </source>
</reference>
<reference key="2">
    <citation type="journal article" date="2005" name="Nature">
        <title>The map-based sequence of the rice genome.</title>
        <authorList>
            <consortium name="International rice genome sequencing project (IRGSP)"/>
        </authorList>
    </citation>
    <scope>NUCLEOTIDE SEQUENCE [LARGE SCALE GENOMIC DNA]</scope>
    <source>
        <strain>cv. Nipponbare</strain>
    </source>
</reference>
<reference key="3">
    <citation type="journal article" date="2008" name="Nucleic Acids Res.">
        <title>The rice annotation project database (RAP-DB): 2008 update.</title>
        <authorList>
            <consortium name="The rice annotation project (RAP)"/>
        </authorList>
    </citation>
    <scope>GENOME REANNOTATION</scope>
    <source>
        <strain>cv. Nipponbare</strain>
    </source>
</reference>
<reference key="4">
    <citation type="journal article" date="2013" name="Rice">
        <title>Improvement of the Oryza sativa Nipponbare reference genome using next generation sequence and optical map data.</title>
        <authorList>
            <person name="Kawahara Y."/>
            <person name="de la Bastide M."/>
            <person name="Hamilton J.P."/>
            <person name="Kanamori H."/>
            <person name="McCombie W.R."/>
            <person name="Ouyang S."/>
            <person name="Schwartz D.C."/>
            <person name="Tanaka T."/>
            <person name="Wu J."/>
            <person name="Zhou S."/>
            <person name="Childs K.L."/>
            <person name="Davidson R.M."/>
            <person name="Lin H."/>
            <person name="Quesada-Ocampo L."/>
            <person name="Vaillancourt B."/>
            <person name="Sakai H."/>
            <person name="Lee S.S."/>
            <person name="Kim J."/>
            <person name="Numa H."/>
            <person name="Itoh T."/>
            <person name="Buell C.R."/>
            <person name="Matsumoto T."/>
        </authorList>
    </citation>
    <scope>GENOME REANNOTATION</scope>
    <source>
        <strain>cv. Nipponbare</strain>
    </source>
</reference>
<reference key="5">
    <citation type="journal article" date="2007" name="Genomics">
        <title>The two-component signal system in rice (Oryza sativa L.): a genome-wide study of cytokinin signal perception and transduction.</title>
        <authorList>
            <person name="Du L."/>
            <person name="Jiao F."/>
            <person name="Chu J."/>
            <person name="Jin G."/>
            <person name="Chen M."/>
            <person name="Wu P."/>
        </authorList>
    </citation>
    <scope>INDUCTION BY CYTOKININ</scope>
</reference>
<reference key="6">
    <citation type="journal article" date="2007" name="Plant Physiol.">
        <title>Nomenclature for two-component signaling elements of rice.</title>
        <authorList>
            <person name="Schaller G.E."/>
            <person name="Doi K."/>
            <person name="Hwang I."/>
            <person name="Kieber J.J."/>
            <person name="Khurana J.P."/>
            <person name="Kurata N."/>
            <person name="Mizuno T."/>
            <person name="Pareek A."/>
            <person name="Shiu S.H."/>
            <person name="Wu P."/>
            <person name="Yip W.K."/>
        </authorList>
    </citation>
    <scope>GENE FAMILY</scope>
    <scope>NOMENCLATURE</scope>
</reference>
<reference key="7">
    <citation type="journal article" date="2012" name="Plant Cell Physiol.">
        <title>Functional identification of OsHk6 as a homotypic cytokinin receptor in rice with preferential affinity for iP.</title>
        <authorList>
            <person name="Choi J."/>
            <person name="Lee J."/>
            <person name="Kim K."/>
            <person name="Cho M."/>
            <person name="Ryu H."/>
            <person name="An G."/>
            <person name="Hwang I."/>
        </authorList>
    </citation>
    <scope>FUNCTION</scope>
    <scope>TISSUE SPECIFICITY</scope>
    <scope>INDUCTION</scope>
    <scope>MUTAGENESIS OF HIS-365; GLY-614 AND ASP-877</scope>
</reference>
<gene>
    <name evidence="8" type="primary">HK6</name>
    <name evidence="7" type="synonym">OHK5</name>
    <name evidence="11" type="ordered locus">Os02g0738400</name>
    <name evidence="10" type="ordered locus">LOC_Os02g50480</name>
    <name evidence="12" type="ORF">P0684F11.6</name>
</gene>
<name>OHK6_ORYSJ</name>
<protein>
    <recommendedName>
        <fullName evidence="10">Probable histidine kinase 6</fullName>
        <shortName evidence="9">OsHK6</shortName>
        <ecNumber evidence="10">2.7.13.3</ecNumber>
    </recommendedName>
    <alternativeName>
        <fullName evidence="10">OsCRL1a</fullName>
    </alternativeName>
</protein>
<dbReference type="EC" id="2.7.13.3" evidence="10"/>
<dbReference type="EMBL" id="BR000247">
    <property type="protein sequence ID" value="FAA00251.1"/>
    <property type="molecule type" value="Genomic_DNA"/>
</dbReference>
<dbReference type="EMBL" id="AP005112">
    <property type="protein sequence ID" value="BAD16039.1"/>
    <property type="status" value="ALT_SEQ"/>
    <property type="molecule type" value="Genomic_DNA"/>
</dbReference>
<dbReference type="EMBL" id="AP008208">
    <property type="status" value="NOT_ANNOTATED_CDS"/>
    <property type="molecule type" value="Genomic_DNA"/>
</dbReference>
<dbReference type="EMBL" id="AP014958">
    <property type="protein sequence ID" value="BAS80826.1"/>
    <property type="molecule type" value="Genomic_DNA"/>
</dbReference>
<dbReference type="SMR" id="A1A699"/>
<dbReference type="FunCoup" id="A1A699">
    <property type="interactions" value="83"/>
</dbReference>
<dbReference type="STRING" id="39947.A1A699"/>
<dbReference type="PaxDb" id="39947-A1A699"/>
<dbReference type="EnsemblPlants" id="Os02t0738400-02">
    <property type="protein sequence ID" value="Os02t0738400-02"/>
    <property type="gene ID" value="Os02g0738400"/>
</dbReference>
<dbReference type="GeneID" id="107275680"/>
<dbReference type="Gramene" id="Os02t0738400-02">
    <property type="protein sequence ID" value="Os02t0738400-02"/>
    <property type="gene ID" value="Os02g0738400"/>
</dbReference>
<dbReference type="KEGG" id="osa:107275680"/>
<dbReference type="eggNOG" id="KOG0519">
    <property type="taxonomic scope" value="Eukaryota"/>
</dbReference>
<dbReference type="HOGENOM" id="CLU_000445_16_2_1"/>
<dbReference type="InParanoid" id="A1A699"/>
<dbReference type="OrthoDB" id="303614at2759"/>
<dbReference type="Proteomes" id="UP000000763">
    <property type="component" value="Chromosome 2"/>
</dbReference>
<dbReference type="Proteomes" id="UP000059680">
    <property type="component" value="Chromosome 2"/>
</dbReference>
<dbReference type="ExpressionAtlas" id="A1A699">
    <property type="expression patterns" value="baseline and differential"/>
</dbReference>
<dbReference type="GO" id="GO:0005634">
    <property type="term" value="C:nucleus"/>
    <property type="evidence" value="ECO:0000318"/>
    <property type="project" value="GO_Central"/>
</dbReference>
<dbReference type="GO" id="GO:0005886">
    <property type="term" value="C:plasma membrane"/>
    <property type="evidence" value="ECO:0007669"/>
    <property type="project" value="UniProtKB-SubCell"/>
</dbReference>
<dbReference type="GO" id="GO:0019955">
    <property type="term" value="F:cytokine binding"/>
    <property type="evidence" value="ECO:0000314"/>
    <property type="project" value="UniProtKB"/>
</dbReference>
<dbReference type="GO" id="GO:0000155">
    <property type="term" value="F:phosphorelay sensor kinase activity"/>
    <property type="evidence" value="ECO:0000314"/>
    <property type="project" value="UniProtKB"/>
</dbReference>
<dbReference type="GO" id="GO:0004673">
    <property type="term" value="F:protein histidine kinase activity"/>
    <property type="evidence" value="ECO:0000314"/>
    <property type="project" value="UniProtKB"/>
</dbReference>
<dbReference type="GO" id="GO:0009736">
    <property type="term" value="P:cytokinin-activated signaling pathway"/>
    <property type="evidence" value="ECO:0007669"/>
    <property type="project" value="UniProtKB-KW"/>
</dbReference>
<dbReference type="GO" id="GO:0006468">
    <property type="term" value="P:protein phosphorylation"/>
    <property type="evidence" value="ECO:0000314"/>
    <property type="project" value="UniProtKB"/>
</dbReference>
<dbReference type="CDD" id="cd16922">
    <property type="entry name" value="HATPase_EvgS-ArcB-TorS-like"/>
    <property type="match status" value="1"/>
</dbReference>
<dbReference type="CDD" id="cd00082">
    <property type="entry name" value="HisKA"/>
    <property type="match status" value="1"/>
</dbReference>
<dbReference type="CDD" id="cd17546">
    <property type="entry name" value="REC_hyHK_CKI1_RcsC-like"/>
    <property type="match status" value="1"/>
</dbReference>
<dbReference type="FunFam" id="3.40.50.2300:FF:000137">
    <property type="entry name" value="Histidine kinase 3"/>
    <property type="match status" value="1"/>
</dbReference>
<dbReference type="FunFam" id="1.10.287.130:FF:000015">
    <property type="entry name" value="Histidine kinase 4"/>
    <property type="match status" value="1"/>
</dbReference>
<dbReference type="FunFam" id="3.30.450.350:FF:000001">
    <property type="entry name" value="Histidine kinase 4"/>
    <property type="match status" value="1"/>
</dbReference>
<dbReference type="Gene3D" id="1.10.287.130">
    <property type="match status" value="1"/>
</dbReference>
<dbReference type="Gene3D" id="3.40.50.2300">
    <property type="match status" value="1"/>
</dbReference>
<dbReference type="Gene3D" id="6.10.250.1190">
    <property type="match status" value="1"/>
</dbReference>
<dbReference type="Gene3D" id="3.30.450.350">
    <property type="entry name" value="CHASE domain"/>
    <property type="match status" value="1"/>
</dbReference>
<dbReference type="Gene3D" id="3.30.565.10">
    <property type="entry name" value="Histidine kinase-like ATPase, C-terminal domain"/>
    <property type="match status" value="1"/>
</dbReference>
<dbReference type="InterPro" id="IPR050956">
    <property type="entry name" value="2C_system_His_kinase"/>
</dbReference>
<dbReference type="InterPro" id="IPR006189">
    <property type="entry name" value="CHASE_dom"/>
</dbReference>
<dbReference type="InterPro" id="IPR042240">
    <property type="entry name" value="CHASE_sf"/>
</dbReference>
<dbReference type="InterPro" id="IPR011006">
    <property type="entry name" value="CheY-like_superfamily"/>
</dbReference>
<dbReference type="InterPro" id="IPR036890">
    <property type="entry name" value="HATPase_C_sf"/>
</dbReference>
<dbReference type="InterPro" id="IPR005467">
    <property type="entry name" value="His_kinase_dom"/>
</dbReference>
<dbReference type="InterPro" id="IPR003661">
    <property type="entry name" value="HisK_dim/P_dom"/>
</dbReference>
<dbReference type="InterPro" id="IPR036097">
    <property type="entry name" value="HisK_dim/P_sf"/>
</dbReference>
<dbReference type="InterPro" id="IPR056839">
    <property type="entry name" value="Receiver_AHK4/CRE1_1st"/>
</dbReference>
<dbReference type="InterPro" id="IPR004358">
    <property type="entry name" value="Sig_transdc_His_kin-like_C"/>
</dbReference>
<dbReference type="InterPro" id="IPR001789">
    <property type="entry name" value="Sig_transdc_resp-reg_receiver"/>
</dbReference>
<dbReference type="PANTHER" id="PTHR43719:SF51">
    <property type="entry name" value="HISTIDINE KINASE 4"/>
    <property type="match status" value="1"/>
</dbReference>
<dbReference type="PANTHER" id="PTHR43719">
    <property type="entry name" value="TWO-COMPONENT HISTIDINE KINASE"/>
    <property type="match status" value="1"/>
</dbReference>
<dbReference type="Pfam" id="PF03924">
    <property type="entry name" value="CHASE"/>
    <property type="match status" value="1"/>
</dbReference>
<dbReference type="Pfam" id="PF02518">
    <property type="entry name" value="HATPase_c"/>
    <property type="match status" value="1"/>
</dbReference>
<dbReference type="Pfam" id="PF00512">
    <property type="entry name" value="HisKA"/>
    <property type="match status" value="1"/>
</dbReference>
<dbReference type="Pfam" id="PF24896">
    <property type="entry name" value="Receiver_CRE1"/>
    <property type="match status" value="1"/>
</dbReference>
<dbReference type="Pfam" id="PF00072">
    <property type="entry name" value="Response_reg"/>
    <property type="match status" value="1"/>
</dbReference>
<dbReference type="PRINTS" id="PR00344">
    <property type="entry name" value="BCTRLSENSOR"/>
</dbReference>
<dbReference type="SMART" id="SM01079">
    <property type="entry name" value="CHASE"/>
    <property type="match status" value="1"/>
</dbReference>
<dbReference type="SMART" id="SM00387">
    <property type="entry name" value="HATPase_c"/>
    <property type="match status" value="1"/>
</dbReference>
<dbReference type="SMART" id="SM00388">
    <property type="entry name" value="HisKA"/>
    <property type="match status" value="1"/>
</dbReference>
<dbReference type="SMART" id="SM00448">
    <property type="entry name" value="REC"/>
    <property type="match status" value="1"/>
</dbReference>
<dbReference type="SUPFAM" id="SSF55874">
    <property type="entry name" value="ATPase domain of HSP90 chaperone/DNA topoisomerase II/histidine kinase"/>
    <property type="match status" value="1"/>
</dbReference>
<dbReference type="SUPFAM" id="SSF52172">
    <property type="entry name" value="CheY-like"/>
    <property type="match status" value="2"/>
</dbReference>
<dbReference type="SUPFAM" id="SSF47384">
    <property type="entry name" value="Homodimeric domain of signal transducing histidine kinase"/>
    <property type="match status" value="1"/>
</dbReference>
<dbReference type="PROSITE" id="PS50839">
    <property type="entry name" value="CHASE"/>
    <property type="match status" value="1"/>
</dbReference>
<dbReference type="PROSITE" id="PS50109">
    <property type="entry name" value="HIS_KIN"/>
    <property type="match status" value="1"/>
</dbReference>
<dbReference type="PROSITE" id="PS50110">
    <property type="entry name" value="RESPONSE_REGULATORY"/>
    <property type="match status" value="2"/>
</dbReference>
<accession>A1A699</accession>
<accession>A0A0P0VP61</accession>
<accession>Q6Z5P3</accession>
<sequence>MGKPEARSGWRNAAAAAWVLVAVACAAYMHWHLRRETMDRAEERLVSMCEERARMLQEQFGVTVNHVHALAILISTFHFEKFPSAIDQDTFAKYTARTSFERPLLNGVAYAQRIFHHEREMFENQQGWIMKTMKRQAAPPQDEYAPVIFSQDTVSYLARIDMMSGEEDRENILRARATGKAVLTNPFRLLGSNHLGVVLTFAVYRPGLAADASVEERVEATAGYLGGAFDVESLVENLLSKLAGNQDIVVNVYDVTNASEPMAMYGPQSPDGKVSLFHVSTLDFGDPFRAHEMRCRYRQKPPLPWSAITNPLGTFVIWMLVGYIICAAWSRYDKVSEDCRKMEELKTQAEAADVAKSQFLATVSHEIRTPMNGVLGMLDMLLGTDLSMTQKDYAQTAQMCGRALITLINDVLDRAKIEAGKLELEAVPFDLRSLMDDVISLFSSKSREKCIELAVFVCDDVPKVVIGDPWRYRQILTNLVGNAVKFTERGHVFVRVCLAENSKVEANQVLNGTMNGKDGKVETTANGAFNTLSGFQAADERNNWDYFKLLLSDKEPHMDELECDRSYQNDCDCVTLMISIEDTGVGIPLHAQDRVFTPFMQADSSTSRNYGGTGIGLSISKCLAELMGGQISFTSRPFVGSTFTFSAVLKRSCKDTSSDSKRSLSEALPTAFKGMKAILVDGRPVRGAVTRYHLNRLGIVVKVVNNLSMGLQTLAGQNGVKESREKLSMLFIESDIWRPETDILLLNRLHELKNNGQVHELPKLVLLVTSEADKDRYGSAFDIVMYKPIRASTIASCLQQLLKVVMPERKDNQNRPSFLRSLLIGKNILIVDDNKVNLRVAAAALKKYGAKVHCVESGKDAVSLLQQPHCFDACFMDVQMPEMDGFEATRQIRQMEVKANEERKALDLMEGSTFVESHLPVLAMTADVIQATYEECIKSGMDGYVSKPFDEEQLYQAVSRLVVGTKESAV</sequence>
<proteinExistence type="evidence at protein level"/>
<keyword id="KW-1003">Cell membrane</keyword>
<keyword id="KW-0932">Cytokinin signaling pathway</keyword>
<keyword id="KW-0418">Kinase</keyword>
<keyword id="KW-0472">Membrane</keyword>
<keyword id="KW-0597">Phosphoprotein</keyword>
<keyword id="KW-1185">Reference proteome</keyword>
<keyword id="KW-0677">Repeat</keyword>
<keyword id="KW-0808">Transferase</keyword>
<keyword id="KW-0812">Transmembrane</keyword>
<keyword id="KW-1133">Transmembrane helix</keyword>
<keyword id="KW-0902">Two-component regulatory system</keyword>